<comment type="function">
    <text evidence="1">Catalyzes the ATP-dependent amination of UTP to CTP with either L-glutamine or ammonia as the source of nitrogen. Regulates intracellular CTP levels through interactions with the four ribonucleotide triphosphates.</text>
</comment>
<comment type="catalytic activity">
    <reaction evidence="1">
        <text>UTP + L-glutamine + ATP + H2O = CTP + L-glutamate + ADP + phosphate + 2 H(+)</text>
        <dbReference type="Rhea" id="RHEA:26426"/>
        <dbReference type="ChEBI" id="CHEBI:15377"/>
        <dbReference type="ChEBI" id="CHEBI:15378"/>
        <dbReference type="ChEBI" id="CHEBI:29985"/>
        <dbReference type="ChEBI" id="CHEBI:30616"/>
        <dbReference type="ChEBI" id="CHEBI:37563"/>
        <dbReference type="ChEBI" id="CHEBI:43474"/>
        <dbReference type="ChEBI" id="CHEBI:46398"/>
        <dbReference type="ChEBI" id="CHEBI:58359"/>
        <dbReference type="ChEBI" id="CHEBI:456216"/>
        <dbReference type="EC" id="6.3.4.2"/>
    </reaction>
</comment>
<comment type="catalytic activity">
    <reaction evidence="1">
        <text>L-glutamine + H2O = L-glutamate + NH4(+)</text>
        <dbReference type="Rhea" id="RHEA:15889"/>
        <dbReference type="ChEBI" id="CHEBI:15377"/>
        <dbReference type="ChEBI" id="CHEBI:28938"/>
        <dbReference type="ChEBI" id="CHEBI:29985"/>
        <dbReference type="ChEBI" id="CHEBI:58359"/>
    </reaction>
</comment>
<comment type="catalytic activity">
    <reaction evidence="1">
        <text>UTP + NH4(+) + ATP = CTP + ADP + phosphate + 2 H(+)</text>
        <dbReference type="Rhea" id="RHEA:16597"/>
        <dbReference type="ChEBI" id="CHEBI:15378"/>
        <dbReference type="ChEBI" id="CHEBI:28938"/>
        <dbReference type="ChEBI" id="CHEBI:30616"/>
        <dbReference type="ChEBI" id="CHEBI:37563"/>
        <dbReference type="ChEBI" id="CHEBI:43474"/>
        <dbReference type="ChEBI" id="CHEBI:46398"/>
        <dbReference type="ChEBI" id="CHEBI:456216"/>
    </reaction>
</comment>
<comment type="activity regulation">
    <text evidence="1">Allosterically activated by GTP, when glutamine is the substrate; GTP has no effect on the reaction when ammonia is the substrate. The allosteric effector GTP functions by stabilizing the protein conformation that binds the tetrahedral intermediate(s) formed during glutamine hydrolysis. Inhibited by the product CTP, via allosteric rather than competitive inhibition.</text>
</comment>
<comment type="pathway">
    <text evidence="1">Pyrimidine metabolism; CTP biosynthesis via de novo pathway; CTP from UDP: step 2/2.</text>
</comment>
<comment type="subunit">
    <text evidence="1">Homotetramer.</text>
</comment>
<comment type="miscellaneous">
    <text evidence="1">CTPSs have evolved a hybrid strategy for distinguishing between UTP and CTP. The overlapping regions of the product feedback inhibitory and substrate sites recognize a common feature in both compounds, the triphosphate moiety. To differentiate isosteric substrate and product pyrimidine rings, an additional pocket far from the expected kinase/ligase catalytic site, specifically recognizes the cytosine and ribose portions of the product inhibitor.</text>
</comment>
<comment type="similarity">
    <text evidence="1">Belongs to the CTP synthase family.</text>
</comment>
<feature type="chain" id="PRO_1000214019" description="CTP synthase">
    <location>
        <begin position="1"/>
        <end position="545"/>
    </location>
</feature>
<feature type="domain" description="Glutamine amidotransferase type-1" evidence="1">
    <location>
        <begin position="291"/>
        <end position="542"/>
    </location>
</feature>
<feature type="region of interest" description="Amidoligase domain" evidence="1">
    <location>
        <begin position="1"/>
        <end position="266"/>
    </location>
</feature>
<feature type="active site" description="Nucleophile; for glutamine hydrolysis" evidence="1">
    <location>
        <position position="379"/>
    </location>
</feature>
<feature type="active site" evidence="1">
    <location>
        <position position="515"/>
    </location>
</feature>
<feature type="active site" evidence="1">
    <location>
        <position position="517"/>
    </location>
</feature>
<feature type="binding site" evidence="1">
    <location>
        <position position="14"/>
    </location>
    <ligand>
        <name>CTP</name>
        <dbReference type="ChEBI" id="CHEBI:37563"/>
        <note>allosteric inhibitor</note>
    </ligand>
</feature>
<feature type="binding site" evidence="1">
    <location>
        <position position="14"/>
    </location>
    <ligand>
        <name>UTP</name>
        <dbReference type="ChEBI" id="CHEBI:46398"/>
    </ligand>
</feature>
<feature type="binding site" evidence="1">
    <location>
        <begin position="15"/>
        <end position="20"/>
    </location>
    <ligand>
        <name>ATP</name>
        <dbReference type="ChEBI" id="CHEBI:30616"/>
    </ligand>
</feature>
<feature type="binding site" evidence="1">
    <location>
        <position position="72"/>
    </location>
    <ligand>
        <name>ATP</name>
        <dbReference type="ChEBI" id="CHEBI:30616"/>
    </ligand>
</feature>
<feature type="binding site" evidence="1">
    <location>
        <position position="72"/>
    </location>
    <ligand>
        <name>Mg(2+)</name>
        <dbReference type="ChEBI" id="CHEBI:18420"/>
    </ligand>
</feature>
<feature type="binding site" evidence="1">
    <location>
        <position position="140"/>
    </location>
    <ligand>
        <name>Mg(2+)</name>
        <dbReference type="ChEBI" id="CHEBI:18420"/>
    </ligand>
</feature>
<feature type="binding site" evidence="1">
    <location>
        <begin position="147"/>
        <end position="149"/>
    </location>
    <ligand>
        <name>CTP</name>
        <dbReference type="ChEBI" id="CHEBI:37563"/>
        <note>allosteric inhibitor</note>
    </ligand>
</feature>
<feature type="binding site" evidence="1">
    <location>
        <begin position="187"/>
        <end position="192"/>
    </location>
    <ligand>
        <name>CTP</name>
        <dbReference type="ChEBI" id="CHEBI:37563"/>
        <note>allosteric inhibitor</note>
    </ligand>
</feature>
<feature type="binding site" evidence="1">
    <location>
        <begin position="187"/>
        <end position="192"/>
    </location>
    <ligand>
        <name>UTP</name>
        <dbReference type="ChEBI" id="CHEBI:46398"/>
    </ligand>
</feature>
<feature type="binding site" evidence="1">
    <location>
        <position position="223"/>
    </location>
    <ligand>
        <name>CTP</name>
        <dbReference type="ChEBI" id="CHEBI:37563"/>
        <note>allosteric inhibitor</note>
    </ligand>
</feature>
<feature type="binding site" evidence="1">
    <location>
        <position position="223"/>
    </location>
    <ligand>
        <name>UTP</name>
        <dbReference type="ChEBI" id="CHEBI:46398"/>
    </ligand>
</feature>
<feature type="binding site" evidence="1">
    <location>
        <begin position="239"/>
        <end position="241"/>
    </location>
    <ligand>
        <name>ATP</name>
        <dbReference type="ChEBI" id="CHEBI:30616"/>
    </ligand>
</feature>
<feature type="binding site" evidence="1">
    <location>
        <position position="352"/>
    </location>
    <ligand>
        <name>L-glutamine</name>
        <dbReference type="ChEBI" id="CHEBI:58359"/>
    </ligand>
</feature>
<feature type="binding site" evidence="1">
    <location>
        <begin position="380"/>
        <end position="383"/>
    </location>
    <ligand>
        <name>L-glutamine</name>
        <dbReference type="ChEBI" id="CHEBI:58359"/>
    </ligand>
</feature>
<feature type="binding site" evidence="1">
    <location>
        <position position="403"/>
    </location>
    <ligand>
        <name>L-glutamine</name>
        <dbReference type="ChEBI" id="CHEBI:58359"/>
    </ligand>
</feature>
<feature type="binding site" evidence="1">
    <location>
        <position position="470"/>
    </location>
    <ligand>
        <name>L-glutamine</name>
        <dbReference type="ChEBI" id="CHEBI:58359"/>
    </ligand>
</feature>
<name>PYRG_TOLAT</name>
<sequence>MTTKYIFVTGGVVSSLGKGIAAASLAAVLEARGLKVTMLKLDPYINVDPGTMSPIQHGEVFVTEDGAETDLDLGHYERFIRTKMSRRNNFTTGRVYSDVLRKERRGDYLGATIQVIPHITNAIKERVIAGAEGHDVAIVEIGGTVGDIESLPFLEAIRQLAVDIGRNNALFMHLTLVPYLAAAGEVKTKPTQHSVKELLSIGIQPDILICRSDRAIPANERAKIALFCNVPERAVISLKDVDSIYKIPALLKSQGLDQLVVDRFGLQCGEANLAEWEQVIYQEANPTGEVTIGMVGKYVSLPDAYKSVNEALKHAGLKNRLSINIRYIDSQDLETKGLEVLDGLDAILVPGGFGERGVEGKILAAQYARENKIPYLGICLGMQVALIEFARHVAGMDGAHSSEFKRDTPYPVVGLITEWIDEEGKVEVRTEGSDLGGTMRLGSQLCHLVEGSKVRALYGSDTIQERHRHRYEVNNTLLPKIEAAGLKVTGLSADKKLVEIVENPDHPWFVAVQFHPEFTSTPRDGHPLFEGFIQAAGEYMKRHLN</sequence>
<organism>
    <name type="scientific">Tolumonas auensis (strain DSM 9187 / NBRC 110442 / TA 4)</name>
    <dbReference type="NCBI Taxonomy" id="595494"/>
    <lineage>
        <taxon>Bacteria</taxon>
        <taxon>Pseudomonadati</taxon>
        <taxon>Pseudomonadota</taxon>
        <taxon>Gammaproteobacteria</taxon>
        <taxon>Aeromonadales</taxon>
        <taxon>Aeromonadaceae</taxon>
        <taxon>Tolumonas</taxon>
    </lineage>
</organism>
<proteinExistence type="inferred from homology"/>
<reference key="1">
    <citation type="submission" date="2009-05" db="EMBL/GenBank/DDBJ databases">
        <title>Complete sequence of Tolumonas auensis DSM 9187.</title>
        <authorList>
            <consortium name="US DOE Joint Genome Institute"/>
            <person name="Lucas S."/>
            <person name="Copeland A."/>
            <person name="Lapidus A."/>
            <person name="Glavina del Rio T."/>
            <person name="Tice H."/>
            <person name="Bruce D."/>
            <person name="Goodwin L."/>
            <person name="Pitluck S."/>
            <person name="Chertkov O."/>
            <person name="Brettin T."/>
            <person name="Detter J.C."/>
            <person name="Han C."/>
            <person name="Larimer F."/>
            <person name="Land M."/>
            <person name="Hauser L."/>
            <person name="Kyrpides N."/>
            <person name="Mikhailova N."/>
            <person name="Spring S."/>
            <person name="Beller H."/>
        </authorList>
    </citation>
    <scope>NUCLEOTIDE SEQUENCE [LARGE SCALE GENOMIC DNA]</scope>
    <source>
        <strain>DSM 9187 / NBRC 110442 / TA 4</strain>
    </source>
</reference>
<keyword id="KW-0067">ATP-binding</keyword>
<keyword id="KW-0315">Glutamine amidotransferase</keyword>
<keyword id="KW-0436">Ligase</keyword>
<keyword id="KW-0460">Magnesium</keyword>
<keyword id="KW-0479">Metal-binding</keyword>
<keyword id="KW-0547">Nucleotide-binding</keyword>
<keyword id="KW-0665">Pyrimidine biosynthesis</keyword>
<keyword id="KW-1185">Reference proteome</keyword>
<evidence type="ECO:0000255" key="1">
    <source>
        <dbReference type="HAMAP-Rule" id="MF_01227"/>
    </source>
</evidence>
<accession>C4LBR2</accession>
<gene>
    <name evidence="1" type="primary">pyrG</name>
    <name type="ordered locus">Tola_2743</name>
</gene>
<protein>
    <recommendedName>
        <fullName evidence="1">CTP synthase</fullName>
        <ecNumber evidence="1">6.3.4.2</ecNumber>
    </recommendedName>
    <alternativeName>
        <fullName evidence="1">Cytidine 5'-triphosphate synthase</fullName>
    </alternativeName>
    <alternativeName>
        <fullName evidence="1">Cytidine triphosphate synthetase</fullName>
        <shortName evidence="1">CTP synthetase</shortName>
        <shortName evidence="1">CTPS</shortName>
    </alternativeName>
    <alternativeName>
        <fullName evidence="1">UTP--ammonia ligase</fullName>
    </alternativeName>
</protein>
<dbReference type="EC" id="6.3.4.2" evidence="1"/>
<dbReference type="EMBL" id="CP001616">
    <property type="protein sequence ID" value="ACQ94336.1"/>
    <property type="molecule type" value="Genomic_DNA"/>
</dbReference>
<dbReference type="RefSeq" id="WP_015879785.1">
    <property type="nucleotide sequence ID" value="NC_012691.1"/>
</dbReference>
<dbReference type="SMR" id="C4LBR2"/>
<dbReference type="STRING" id="595494.Tola_2743"/>
<dbReference type="KEGG" id="tau:Tola_2743"/>
<dbReference type="eggNOG" id="COG0504">
    <property type="taxonomic scope" value="Bacteria"/>
</dbReference>
<dbReference type="HOGENOM" id="CLU_011675_5_0_6"/>
<dbReference type="OrthoDB" id="9801107at2"/>
<dbReference type="UniPathway" id="UPA00159">
    <property type="reaction ID" value="UER00277"/>
</dbReference>
<dbReference type="Proteomes" id="UP000009073">
    <property type="component" value="Chromosome"/>
</dbReference>
<dbReference type="GO" id="GO:0005829">
    <property type="term" value="C:cytosol"/>
    <property type="evidence" value="ECO:0007669"/>
    <property type="project" value="TreeGrafter"/>
</dbReference>
<dbReference type="GO" id="GO:0005524">
    <property type="term" value="F:ATP binding"/>
    <property type="evidence" value="ECO:0007669"/>
    <property type="project" value="UniProtKB-KW"/>
</dbReference>
<dbReference type="GO" id="GO:0003883">
    <property type="term" value="F:CTP synthase activity"/>
    <property type="evidence" value="ECO:0007669"/>
    <property type="project" value="UniProtKB-UniRule"/>
</dbReference>
<dbReference type="GO" id="GO:0004359">
    <property type="term" value="F:glutaminase activity"/>
    <property type="evidence" value="ECO:0007669"/>
    <property type="project" value="RHEA"/>
</dbReference>
<dbReference type="GO" id="GO:0042802">
    <property type="term" value="F:identical protein binding"/>
    <property type="evidence" value="ECO:0007669"/>
    <property type="project" value="TreeGrafter"/>
</dbReference>
<dbReference type="GO" id="GO:0046872">
    <property type="term" value="F:metal ion binding"/>
    <property type="evidence" value="ECO:0007669"/>
    <property type="project" value="UniProtKB-KW"/>
</dbReference>
<dbReference type="GO" id="GO:0044210">
    <property type="term" value="P:'de novo' CTP biosynthetic process"/>
    <property type="evidence" value="ECO:0007669"/>
    <property type="project" value="UniProtKB-UniRule"/>
</dbReference>
<dbReference type="GO" id="GO:0019856">
    <property type="term" value="P:pyrimidine nucleobase biosynthetic process"/>
    <property type="evidence" value="ECO:0007669"/>
    <property type="project" value="TreeGrafter"/>
</dbReference>
<dbReference type="CDD" id="cd03113">
    <property type="entry name" value="CTPS_N"/>
    <property type="match status" value="1"/>
</dbReference>
<dbReference type="CDD" id="cd01746">
    <property type="entry name" value="GATase1_CTP_Synthase"/>
    <property type="match status" value="1"/>
</dbReference>
<dbReference type="FunFam" id="3.40.50.300:FF:000009">
    <property type="entry name" value="CTP synthase"/>
    <property type="match status" value="1"/>
</dbReference>
<dbReference type="FunFam" id="3.40.50.880:FF:000002">
    <property type="entry name" value="CTP synthase"/>
    <property type="match status" value="1"/>
</dbReference>
<dbReference type="Gene3D" id="3.40.50.880">
    <property type="match status" value="1"/>
</dbReference>
<dbReference type="Gene3D" id="3.40.50.300">
    <property type="entry name" value="P-loop containing nucleotide triphosphate hydrolases"/>
    <property type="match status" value="1"/>
</dbReference>
<dbReference type="HAMAP" id="MF_01227">
    <property type="entry name" value="PyrG"/>
    <property type="match status" value="1"/>
</dbReference>
<dbReference type="InterPro" id="IPR029062">
    <property type="entry name" value="Class_I_gatase-like"/>
</dbReference>
<dbReference type="InterPro" id="IPR004468">
    <property type="entry name" value="CTP_synthase"/>
</dbReference>
<dbReference type="InterPro" id="IPR017456">
    <property type="entry name" value="CTP_synthase_N"/>
</dbReference>
<dbReference type="InterPro" id="IPR017926">
    <property type="entry name" value="GATASE"/>
</dbReference>
<dbReference type="InterPro" id="IPR033828">
    <property type="entry name" value="GATase1_CTP_Synthase"/>
</dbReference>
<dbReference type="InterPro" id="IPR027417">
    <property type="entry name" value="P-loop_NTPase"/>
</dbReference>
<dbReference type="NCBIfam" id="NF003792">
    <property type="entry name" value="PRK05380.1"/>
    <property type="match status" value="1"/>
</dbReference>
<dbReference type="NCBIfam" id="TIGR00337">
    <property type="entry name" value="PyrG"/>
    <property type="match status" value="1"/>
</dbReference>
<dbReference type="PANTHER" id="PTHR11550">
    <property type="entry name" value="CTP SYNTHASE"/>
    <property type="match status" value="1"/>
</dbReference>
<dbReference type="PANTHER" id="PTHR11550:SF0">
    <property type="entry name" value="CTP SYNTHASE-RELATED"/>
    <property type="match status" value="1"/>
</dbReference>
<dbReference type="Pfam" id="PF06418">
    <property type="entry name" value="CTP_synth_N"/>
    <property type="match status" value="1"/>
</dbReference>
<dbReference type="Pfam" id="PF00117">
    <property type="entry name" value="GATase"/>
    <property type="match status" value="1"/>
</dbReference>
<dbReference type="SUPFAM" id="SSF52317">
    <property type="entry name" value="Class I glutamine amidotransferase-like"/>
    <property type="match status" value="1"/>
</dbReference>
<dbReference type="SUPFAM" id="SSF52540">
    <property type="entry name" value="P-loop containing nucleoside triphosphate hydrolases"/>
    <property type="match status" value="1"/>
</dbReference>
<dbReference type="PROSITE" id="PS51273">
    <property type="entry name" value="GATASE_TYPE_1"/>
    <property type="match status" value="1"/>
</dbReference>